<feature type="chain" id="PRO_1000146069" description="Small ribosomal subunit protein uS10">
    <location>
        <begin position="1"/>
        <end position="102"/>
    </location>
</feature>
<dbReference type="EMBL" id="CP001032">
    <property type="protein sequence ID" value="ACB73518.1"/>
    <property type="molecule type" value="Genomic_DNA"/>
</dbReference>
<dbReference type="RefSeq" id="WP_012373056.1">
    <property type="nucleotide sequence ID" value="NC_010571.1"/>
</dbReference>
<dbReference type="SMR" id="B1ZNE9"/>
<dbReference type="STRING" id="452637.Oter_0227"/>
<dbReference type="KEGG" id="ote:Oter_0227"/>
<dbReference type="eggNOG" id="COG0051">
    <property type="taxonomic scope" value="Bacteria"/>
</dbReference>
<dbReference type="HOGENOM" id="CLU_122625_1_3_0"/>
<dbReference type="OrthoDB" id="9804464at2"/>
<dbReference type="Proteomes" id="UP000007013">
    <property type="component" value="Chromosome"/>
</dbReference>
<dbReference type="GO" id="GO:1990904">
    <property type="term" value="C:ribonucleoprotein complex"/>
    <property type="evidence" value="ECO:0007669"/>
    <property type="project" value="UniProtKB-KW"/>
</dbReference>
<dbReference type="GO" id="GO:0005840">
    <property type="term" value="C:ribosome"/>
    <property type="evidence" value="ECO:0007669"/>
    <property type="project" value="UniProtKB-KW"/>
</dbReference>
<dbReference type="GO" id="GO:0003735">
    <property type="term" value="F:structural constituent of ribosome"/>
    <property type="evidence" value="ECO:0007669"/>
    <property type="project" value="InterPro"/>
</dbReference>
<dbReference type="GO" id="GO:0000049">
    <property type="term" value="F:tRNA binding"/>
    <property type="evidence" value="ECO:0007669"/>
    <property type="project" value="UniProtKB-UniRule"/>
</dbReference>
<dbReference type="GO" id="GO:0006412">
    <property type="term" value="P:translation"/>
    <property type="evidence" value="ECO:0007669"/>
    <property type="project" value="UniProtKB-UniRule"/>
</dbReference>
<dbReference type="FunFam" id="3.30.70.600:FF:000003">
    <property type="entry name" value="30S ribosomal protein S10"/>
    <property type="match status" value="1"/>
</dbReference>
<dbReference type="Gene3D" id="3.30.70.600">
    <property type="entry name" value="Ribosomal protein S10 domain"/>
    <property type="match status" value="1"/>
</dbReference>
<dbReference type="HAMAP" id="MF_00508">
    <property type="entry name" value="Ribosomal_uS10"/>
    <property type="match status" value="1"/>
</dbReference>
<dbReference type="InterPro" id="IPR001848">
    <property type="entry name" value="Ribosomal_uS10"/>
</dbReference>
<dbReference type="InterPro" id="IPR018268">
    <property type="entry name" value="Ribosomal_uS10_CS"/>
</dbReference>
<dbReference type="InterPro" id="IPR027486">
    <property type="entry name" value="Ribosomal_uS10_dom"/>
</dbReference>
<dbReference type="InterPro" id="IPR036838">
    <property type="entry name" value="Ribosomal_uS10_dom_sf"/>
</dbReference>
<dbReference type="NCBIfam" id="NF001861">
    <property type="entry name" value="PRK00596.1"/>
    <property type="match status" value="1"/>
</dbReference>
<dbReference type="NCBIfam" id="TIGR01049">
    <property type="entry name" value="rpsJ_bact"/>
    <property type="match status" value="1"/>
</dbReference>
<dbReference type="PANTHER" id="PTHR11700">
    <property type="entry name" value="30S RIBOSOMAL PROTEIN S10 FAMILY MEMBER"/>
    <property type="match status" value="1"/>
</dbReference>
<dbReference type="Pfam" id="PF00338">
    <property type="entry name" value="Ribosomal_S10"/>
    <property type="match status" value="1"/>
</dbReference>
<dbReference type="PRINTS" id="PR00971">
    <property type="entry name" value="RIBOSOMALS10"/>
</dbReference>
<dbReference type="SMART" id="SM01403">
    <property type="entry name" value="Ribosomal_S10"/>
    <property type="match status" value="1"/>
</dbReference>
<dbReference type="SUPFAM" id="SSF54999">
    <property type="entry name" value="Ribosomal protein S10"/>
    <property type="match status" value="1"/>
</dbReference>
<dbReference type="PROSITE" id="PS00361">
    <property type="entry name" value="RIBOSOMAL_S10"/>
    <property type="match status" value="1"/>
</dbReference>
<reference key="1">
    <citation type="journal article" date="2011" name="J. Bacteriol.">
        <title>Genome sequence of the verrucomicrobium Opitutus terrae PB90-1, an abundant inhabitant of rice paddy soil ecosystems.</title>
        <authorList>
            <person name="van Passel M.W."/>
            <person name="Kant R."/>
            <person name="Palva A."/>
            <person name="Copeland A."/>
            <person name="Lucas S."/>
            <person name="Lapidus A."/>
            <person name="Glavina del Rio T."/>
            <person name="Pitluck S."/>
            <person name="Goltsman E."/>
            <person name="Clum A."/>
            <person name="Sun H."/>
            <person name="Schmutz J."/>
            <person name="Larimer F.W."/>
            <person name="Land M.L."/>
            <person name="Hauser L."/>
            <person name="Kyrpides N."/>
            <person name="Mikhailova N."/>
            <person name="Richardson P.P."/>
            <person name="Janssen P.H."/>
            <person name="de Vos W.M."/>
            <person name="Smidt H."/>
        </authorList>
    </citation>
    <scope>NUCLEOTIDE SEQUENCE [LARGE SCALE GENOMIC DNA]</scope>
    <source>
        <strain>DSM 11246 / JCM 15787 / PB90-1</strain>
    </source>
</reference>
<proteinExistence type="inferred from homology"/>
<accession>B1ZNE9</accession>
<evidence type="ECO:0000255" key="1">
    <source>
        <dbReference type="HAMAP-Rule" id="MF_00508"/>
    </source>
</evidence>
<evidence type="ECO:0000305" key="2"/>
<comment type="function">
    <text evidence="1">Involved in the binding of tRNA to the ribosomes.</text>
</comment>
<comment type="subunit">
    <text evidence="1">Part of the 30S ribosomal subunit.</text>
</comment>
<comment type="similarity">
    <text evidence="1">Belongs to the universal ribosomal protein uS10 family.</text>
</comment>
<name>RS10_OPITP</name>
<protein>
    <recommendedName>
        <fullName evidence="1">Small ribosomal subunit protein uS10</fullName>
    </recommendedName>
    <alternativeName>
        <fullName evidence="2">30S ribosomal protein S10</fullName>
    </alternativeName>
</protein>
<gene>
    <name evidence="1" type="primary">rpsJ</name>
    <name type="ordered locus">Oter_0227</name>
</gene>
<keyword id="KW-1185">Reference proteome</keyword>
<keyword id="KW-0687">Ribonucleoprotein</keyword>
<keyword id="KW-0689">Ribosomal protein</keyword>
<organism>
    <name type="scientific">Opitutus terrae (strain DSM 11246 / JCM 15787 / PB90-1)</name>
    <dbReference type="NCBI Taxonomy" id="452637"/>
    <lineage>
        <taxon>Bacteria</taxon>
        <taxon>Pseudomonadati</taxon>
        <taxon>Verrucomicrobiota</taxon>
        <taxon>Opitutia</taxon>
        <taxon>Opitutales</taxon>
        <taxon>Opitutaceae</taxon>
        <taxon>Opitutus</taxon>
    </lineage>
</organism>
<sequence>MKGQRIRIKLQGFDYRVIDQSALEIVETAKRSGARVSGPIPLPTRVEKLSVNRSPHVDKKSMEQFETRTHKRLIDIIEPTAQTVDELKKLNLPSGVDITINV</sequence>